<gene>
    <name evidence="1" type="primary">glmU</name>
    <name type="ordered locus">CLK_3014</name>
</gene>
<name>GLMU_CLOBM</name>
<proteinExistence type="inferred from homology"/>
<accession>B1KTE7</accession>
<organism>
    <name type="scientific">Clostridium botulinum (strain Loch Maree / Type A3)</name>
    <dbReference type="NCBI Taxonomy" id="498214"/>
    <lineage>
        <taxon>Bacteria</taxon>
        <taxon>Bacillati</taxon>
        <taxon>Bacillota</taxon>
        <taxon>Clostridia</taxon>
        <taxon>Eubacteriales</taxon>
        <taxon>Clostridiaceae</taxon>
        <taxon>Clostridium</taxon>
    </lineage>
</organism>
<protein>
    <recommendedName>
        <fullName evidence="1">Bifunctional protein GlmU</fullName>
    </recommendedName>
    <domain>
        <recommendedName>
            <fullName evidence="1">UDP-N-acetylglucosamine pyrophosphorylase</fullName>
            <ecNumber evidence="1">2.7.7.23</ecNumber>
        </recommendedName>
        <alternativeName>
            <fullName evidence="1">N-acetylglucosamine-1-phosphate uridyltransferase</fullName>
        </alternativeName>
    </domain>
    <domain>
        <recommendedName>
            <fullName evidence="1">Glucosamine-1-phosphate N-acetyltransferase</fullName>
            <ecNumber evidence="1">2.3.1.157</ecNumber>
        </recommendedName>
    </domain>
</protein>
<feature type="chain" id="PRO_1000186428" description="Bifunctional protein GlmU">
    <location>
        <begin position="1"/>
        <end position="457"/>
    </location>
</feature>
<feature type="region of interest" description="Pyrophosphorylase" evidence="1">
    <location>
        <begin position="1"/>
        <end position="229"/>
    </location>
</feature>
<feature type="region of interest" description="Linker" evidence="1">
    <location>
        <begin position="230"/>
        <end position="250"/>
    </location>
</feature>
<feature type="region of interest" description="N-acetyltransferase" evidence="1">
    <location>
        <begin position="251"/>
        <end position="457"/>
    </location>
</feature>
<feature type="active site" description="Proton acceptor" evidence="1">
    <location>
        <position position="362"/>
    </location>
</feature>
<feature type="binding site" evidence="1">
    <location>
        <begin position="8"/>
        <end position="11"/>
    </location>
    <ligand>
        <name>UDP-N-acetyl-alpha-D-glucosamine</name>
        <dbReference type="ChEBI" id="CHEBI:57705"/>
    </ligand>
</feature>
<feature type="binding site" evidence="1">
    <location>
        <position position="22"/>
    </location>
    <ligand>
        <name>UDP-N-acetyl-alpha-D-glucosamine</name>
        <dbReference type="ChEBI" id="CHEBI:57705"/>
    </ligand>
</feature>
<feature type="binding site" evidence="1">
    <location>
        <position position="73"/>
    </location>
    <ligand>
        <name>UDP-N-acetyl-alpha-D-glucosamine</name>
        <dbReference type="ChEBI" id="CHEBI:57705"/>
    </ligand>
</feature>
<feature type="binding site" evidence="1">
    <location>
        <begin position="78"/>
        <end position="79"/>
    </location>
    <ligand>
        <name>UDP-N-acetyl-alpha-D-glucosamine</name>
        <dbReference type="ChEBI" id="CHEBI:57705"/>
    </ligand>
</feature>
<feature type="binding site" evidence="1">
    <location>
        <position position="103"/>
    </location>
    <ligand>
        <name>Mg(2+)</name>
        <dbReference type="ChEBI" id="CHEBI:18420"/>
    </ligand>
</feature>
<feature type="binding site" evidence="1">
    <location>
        <position position="140"/>
    </location>
    <ligand>
        <name>UDP-N-acetyl-alpha-D-glucosamine</name>
        <dbReference type="ChEBI" id="CHEBI:57705"/>
    </ligand>
</feature>
<feature type="binding site" evidence="1">
    <location>
        <position position="155"/>
    </location>
    <ligand>
        <name>UDP-N-acetyl-alpha-D-glucosamine</name>
        <dbReference type="ChEBI" id="CHEBI:57705"/>
    </ligand>
</feature>
<feature type="binding site" evidence="1">
    <location>
        <position position="170"/>
    </location>
    <ligand>
        <name>UDP-N-acetyl-alpha-D-glucosamine</name>
        <dbReference type="ChEBI" id="CHEBI:57705"/>
    </ligand>
</feature>
<feature type="binding site" evidence="1">
    <location>
        <position position="227"/>
    </location>
    <ligand>
        <name>Mg(2+)</name>
        <dbReference type="ChEBI" id="CHEBI:18420"/>
    </ligand>
</feature>
<feature type="binding site" evidence="1">
    <location>
        <position position="227"/>
    </location>
    <ligand>
        <name>UDP-N-acetyl-alpha-D-glucosamine</name>
        <dbReference type="ChEBI" id="CHEBI:57705"/>
    </ligand>
</feature>
<feature type="binding site" evidence="1">
    <location>
        <position position="332"/>
    </location>
    <ligand>
        <name>UDP-N-acetyl-alpha-D-glucosamine</name>
        <dbReference type="ChEBI" id="CHEBI:57705"/>
    </ligand>
</feature>
<feature type="binding site" evidence="1">
    <location>
        <position position="350"/>
    </location>
    <ligand>
        <name>UDP-N-acetyl-alpha-D-glucosamine</name>
        <dbReference type="ChEBI" id="CHEBI:57705"/>
    </ligand>
</feature>
<feature type="binding site" evidence="1">
    <location>
        <position position="365"/>
    </location>
    <ligand>
        <name>UDP-N-acetyl-alpha-D-glucosamine</name>
        <dbReference type="ChEBI" id="CHEBI:57705"/>
    </ligand>
</feature>
<feature type="binding site" evidence="1">
    <location>
        <position position="376"/>
    </location>
    <ligand>
        <name>UDP-N-acetyl-alpha-D-glucosamine</name>
        <dbReference type="ChEBI" id="CHEBI:57705"/>
    </ligand>
</feature>
<feature type="binding site" evidence="1">
    <location>
        <begin position="385"/>
        <end position="386"/>
    </location>
    <ligand>
        <name>acetyl-CoA</name>
        <dbReference type="ChEBI" id="CHEBI:57288"/>
    </ligand>
</feature>
<feature type="binding site" evidence="1">
    <location>
        <position position="422"/>
    </location>
    <ligand>
        <name>acetyl-CoA</name>
        <dbReference type="ChEBI" id="CHEBI:57288"/>
    </ligand>
</feature>
<feature type="binding site" evidence="1">
    <location>
        <position position="439"/>
    </location>
    <ligand>
        <name>acetyl-CoA</name>
        <dbReference type="ChEBI" id="CHEBI:57288"/>
    </ligand>
</feature>
<comment type="function">
    <text evidence="1">Catalyzes the last two sequential reactions in the de novo biosynthetic pathway for UDP-N-acetylglucosamine (UDP-GlcNAc). The C-terminal domain catalyzes the transfer of acetyl group from acetyl coenzyme A to glucosamine-1-phosphate (GlcN-1-P) to produce N-acetylglucosamine-1-phosphate (GlcNAc-1-P), which is converted into UDP-GlcNAc by the transfer of uridine 5-monophosphate (from uridine 5-triphosphate), a reaction catalyzed by the N-terminal domain.</text>
</comment>
<comment type="catalytic activity">
    <reaction evidence="1">
        <text>alpha-D-glucosamine 1-phosphate + acetyl-CoA = N-acetyl-alpha-D-glucosamine 1-phosphate + CoA + H(+)</text>
        <dbReference type="Rhea" id="RHEA:13725"/>
        <dbReference type="ChEBI" id="CHEBI:15378"/>
        <dbReference type="ChEBI" id="CHEBI:57287"/>
        <dbReference type="ChEBI" id="CHEBI:57288"/>
        <dbReference type="ChEBI" id="CHEBI:57776"/>
        <dbReference type="ChEBI" id="CHEBI:58516"/>
        <dbReference type="EC" id="2.3.1.157"/>
    </reaction>
</comment>
<comment type="catalytic activity">
    <reaction evidence="1">
        <text>N-acetyl-alpha-D-glucosamine 1-phosphate + UTP + H(+) = UDP-N-acetyl-alpha-D-glucosamine + diphosphate</text>
        <dbReference type="Rhea" id="RHEA:13509"/>
        <dbReference type="ChEBI" id="CHEBI:15378"/>
        <dbReference type="ChEBI" id="CHEBI:33019"/>
        <dbReference type="ChEBI" id="CHEBI:46398"/>
        <dbReference type="ChEBI" id="CHEBI:57705"/>
        <dbReference type="ChEBI" id="CHEBI:57776"/>
        <dbReference type="EC" id="2.7.7.23"/>
    </reaction>
</comment>
<comment type="cofactor">
    <cofactor evidence="1">
        <name>Mg(2+)</name>
        <dbReference type="ChEBI" id="CHEBI:18420"/>
    </cofactor>
    <text evidence="1">Binds 1 Mg(2+) ion per subunit.</text>
</comment>
<comment type="pathway">
    <text evidence="1">Nucleotide-sugar biosynthesis; UDP-N-acetyl-alpha-D-glucosamine biosynthesis; N-acetyl-alpha-D-glucosamine 1-phosphate from alpha-D-glucosamine 6-phosphate (route II): step 2/2.</text>
</comment>
<comment type="pathway">
    <text evidence="1">Nucleotide-sugar biosynthesis; UDP-N-acetyl-alpha-D-glucosamine biosynthesis; UDP-N-acetyl-alpha-D-glucosamine from N-acetyl-alpha-D-glucosamine 1-phosphate: step 1/1.</text>
</comment>
<comment type="pathway">
    <text evidence="1">Bacterial outer membrane biogenesis; LPS lipid A biosynthesis.</text>
</comment>
<comment type="subunit">
    <text evidence="1">Homotrimer.</text>
</comment>
<comment type="subcellular location">
    <subcellularLocation>
        <location evidence="1">Cytoplasm</location>
    </subcellularLocation>
</comment>
<comment type="similarity">
    <text evidence="1">In the N-terminal section; belongs to the N-acetylglucosamine-1-phosphate uridyltransferase family.</text>
</comment>
<comment type="similarity">
    <text evidence="1">In the C-terminal section; belongs to the transferase hexapeptide repeat family.</text>
</comment>
<dbReference type="EC" id="2.7.7.23" evidence="1"/>
<dbReference type="EC" id="2.3.1.157" evidence="1"/>
<dbReference type="EMBL" id="CP000962">
    <property type="protein sequence ID" value="ACA54753.1"/>
    <property type="molecule type" value="Genomic_DNA"/>
</dbReference>
<dbReference type="RefSeq" id="WP_012342817.1">
    <property type="nucleotide sequence ID" value="NC_010520.1"/>
</dbReference>
<dbReference type="SMR" id="B1KTE7"/>
<dbReference type="KEGG" id="cbl:CLK_3014"/>
<dbReference type="HOGENOM" id="CLU_029499_15_2_9"/>
<dbReference type="UniPathway" id="UPA00113">
    <property type="reaction ID" value="UER00532"/>
</dbReference>
<dbReference type="UniPathway" id="UPA00113">
    <property type="reaction ID" value="UER00533"/>
</dbReference>
<dbReference type="UniPathway" id="UPA00973"/>
<dbReference type="GO" id="GO:0005737">
    <property type="term" value="C:cytoplasm"/>
    <property type="evidence" value="ECO:0007669"/>
    <property type="project" value="UniProtKB-SubCell"/>
</dbReference>
<dbReference type="GO" id="GO:0016020">
    <property type="term" value="C:membrane"/>
    <property type="evidence" value="ECO:0007669"/>
    <property type="project" value="GOC"/>
</dbReference>
<dbReference type="GO" id="GO:0019134">
    <property type="term" value="F:glucosamine-1-phosphate N-acetyltransferase activity"/>
    <property type="evidence" value="ECO:0007669"/>
    <property type="project" value="UniProtKB-UniRule"/>
</dbReference>
<dbReference type="GO" id="GO:0000287">
    <property type="term" value="F:magnesium ion binding"/>
    <property type="evidence" value="ECO:0007669"/>
    <property type="project" value="UniProtKB-UniRule"/>
</dbReference>
<dbReference type="GO" id="GO:0003977">
    <property type="term" value="F:UDP-N-acetylglucosamine diphosphorylase activity"/>
    <property type="evidence" value="ECO:0007669"/>
    <property type="project" value="UniProtKB-UniRule"/>
</dbReference>
<dbReference type="GO" id="GO:0000902">
    <property type="term" value="P:cell morphogenesis"/>
    <property type="evidence" value="ECO:0007669"/>
    <property type="project" value="UniProtKB-UniRule"/>
</dbReference>
<dbReference type="GO" id="GO:0071555">
    <property type="term" value="P:cell wall organization"/>
    <property type="evidence" value="ECO:0007669"/>
    <property type="project" value="UniProtKB-KW"/>
</dbReference>
<dbReference type="GO" id="GO:0009245">
    <property type="term" value="P:lipid A biosynthetic process"/>
    <property type="evidence" value="ECO:0007669"/>
    <property type="project" value="UniProtKB-UniRule"/>
</dbReference>
<dbReference type="GO" id="GO:0009252">
    <property type="term" value="P:peptidoglycan biosynthetic process"/>
    <property type="evidence" value="ECO:0007669"/>
    <property type="project" value="UniProtKB-UniRule"/>
</dbReference>
<dbReference type="GO" id="GO:0008360">
    <property type="term" value="P:regulation of cell shape"/>
    <property type="evidence" value="ECO:0007669"/>
    <property type="project" value="UniProtKB-KW"/>
</dbReference>
<dbReference type="GO" id="GO:0006048">
    <property type="term" value="P:UDP-N-acetylglucosamine biosynthetic process"/>
    <property type="evidence" value="ECO:0007669"/>
    <property type="project" value="UniProtKB-UniPathway"/>
</dbReference>
<dbReference type="CDD" id="cd02540">
    <property type="entry name" value="GT2_GlmU_N_bac"/>
    <property type="match status" value="1"/>
</dbReference>
<dbReference type="CDD" id="cd03353">
    <property type="entry name" value="LbH_GlmU_C"/>
    <property type="match status" value="1"/>
</dbReference>
<dbReference type="Gene3D" id="2.160.10.10">
    <property type="entry name" value="Hexapeptide repeat proteins"/>
    <property type="match status" value="1"/>
</dbReference>
<dbReference type="Gene3D" id="3.90.550.10">
    <property type="entry name" value="Spore Coat Polysaccharide Biosynthesis Protein SpsA, Chain A"/>
    <property type="match status" value="1"/>
</dbReference>
<dbReference type="HAMAP" id="MF_01631">
    <property type="entry name" value="GlmU"/>
    <property type="match status" value="1"/>
</dbReference>
<dbReference type="InterPro" id="IPR005882">
    <property type="entry name" value="Bifunctional_GlmU"/>
</dbReference>
<dbReference type="InterPro" id="IPR050065">
    <property type="entry name" value="GlmU-like"/>
</dbReference>
<dbReference type="InterPro" id="IPR038009">
    <property type="entry name" value="GlmU_C_LbH"/>
</dbReference>
<dbReference type="InterPro" id="IPR001451">
    <property type="entry name" value="Hexapep"/>
</dbReference>
<dbReference type="InterPro" id="IPR005835">
    <property type="entry name" value="NTP_transferase_dom"/>
</dbReference>
<dbReference type="InterPro" id="IPR029044">
    <property type="entry name" value="Nucleotide-diphossugar_trans"/>
</dbReference>
<dbReference type="InterPro" id="IPR011004">
    <property type="entry name" value="Trimer_LpxA-like_sf"/>
</dbReference>
<dbReference type="NCBIfam" id="TIGR01173">
    <property type="entry name" value="glmU"/>
    <property type="match status" value="1"/>
</dbReference>
<dbReference type="NCBIfam" id="NF010934">
    <property type="entry name" value="PRK14354.1"/>
    <property type="match status" value="1"/>
</dbReference>
<dbReference type="PANTHER" id="PTHR43584:SF3">
    <property type="entry name" value="BIFUNCTIONAL PROTEIN GLMU"/>
    <property type="match status" value="1"/>
</dbReference>
<dbReference type="PANTHER" id="PTHR43584">
    <property type="entry name" value="NUCLEOTIDYL TRANSFERASE"/>
    <property type="match status" value="1"/>
</dbReference>
<dbReference type="Pfam" id="PF00132">
    <property type="entry name" value="Hexapep"/>
    <property type="match status" value="3"/>
</dbReference>
<dbReference type="Pfam" id="PF00483">
    <property type="entry name" value="NTP_transferase"/>
    <property type="match status" value="1"/>
</dbReference>
<dbReference type="SUPFAM" id="SSF53448">
    <property type="entry name" value="Nucleotide-diphospho-sugar transferases"/>
    <property type="match status" value="1"/>
</dbReference>
<dbReference type="SUPFAM" id="SSF51161">
    <property type="entry name" value="Trimeric LpxA-like enzymes"/>
    <property type="match status" value="1"/>
</dbReference>
<reference key="1">
    <citation type="journal article" date="2007" name="PLoS ONE">
        <title>Analysis of the neurotoxin complex genes in Clostridium botulinum A1-A4 and B1 strains: BoNT/A3, /Ba4 and /B1 clusters are located within plasmids.</title>
        <authorList>
            <person name="Smith T.J."/>
            <person name="Hill K.K."/>
            <person name="Foley B.T."/>
            <person name="Detter J.C."/>
            <person name="Munk A.C."/>
            <person name="Bruce D.C."/>
            <person name="Doggett N.A."/>
            <person name="Smith L.A."/>
            <person name="Marks J.D."/>
            <person name="Xie G."/>
            <person name="Brettin T.S."/>
        </authorList>
    </citation>
    <scope>NUCLEOTIDE SEQUENCE [LARGE SCALE GENOMIC DNA]</scope>
    <source>
        <strain>Loch Maree / Type A3</strain>
    </source>
</reference>
<evidence type="ECO:0000255" key="1">
    <source>
        <dbReference type="HAMAP-Rule" id="MF_01631"/>
    </source>
</evidence>
<sequence length="457" mass="50180">MYNCAIILAAGKGKRMKSSMPKVVHKVCGKEMVNHVIDNVRKANISDVNLVIGKGSETVKEHTRDRNVTYSMQEEQLGTGHAVICAEEFLKDKKGTVAIFTGDAPLITNETIQELFEFHNSGKYAATLISSTVQDPTGYGRIIREASGEVKKIVEHKDCNEEELKVNEINSGMYCFDIEVLLNSLKNLNNDNSQGEYYLTDVIEIMKESGEKVGAIVVPYEEIMGVNSRVQLSEAEIVMRKRINHKHMVNGVTFIDCESTYIDVDVEIGNDTIIYPGCVIQGNTTIKEECTLYSNSRICNSIIESGVVVENSVILESHVGEGTTVGPFAYIRPETKIGKSARIGDFVEIKKSTIGDNTKVSHLTYIGDAEVGSKCNFGCGTVVVNYDGQKKQKTIIGNNAFIGCNTNLISPVKVNDNTYIAAGSTITKEVPEGSLAIARSKQINKEGWLDKKGLLKK</sequence>
<keyword id="KW-0012">Acyltransferase</keyword>
<keyword id="KW-0133">Cell shape</keyword>
<keyword id="KW-0961">Cell wall biogenesis/degradation</keyword>
<keyword id="KW-0963">Cytoplasm</keyword>
<keyword id="KW-0460">Magnesium</keyword>
<keyword id="KW-0479">Metal-binding</keyword>
<keyword id="KW-0511">Multifunctional enzyme</keyword>
<keyword id="KW-0548">Nucleotidyltransferase</keyword>
<keyword id="KW-0573">Peptidoglycan synthesis</keyword>
<keyword id="KW-0677">Repeat</keyword>
<keyword id="KW-0808">Transferase</keyword>